<protein>
    <recommendedName>
        <fullName>Protein transport protein SEC23</fullName>
    </recommendedName>
</protein>
<reference key="1">
    <citation type="journal article" date="2005" name="Science">
        <title>The genome of the basidiomycetous yeast and human pathogen Cryptococcus neoformans.</title>
        <authorList>
            <person name="Loftus B.J."/>
            <person name="Fung E."/>
            <person name="Roncaglia P."/>
            <person name="Rowley D."/>
            <person name="Amedeo P."/>
            <person name="Bruno D."/>
            <person name="Vamathevan J."/>
            <person name="Miranda M."/>
            <person name="Anderson I.J."/>
            <person name="Fraser J.A."/>
            <person name="Allen J.E."/>
            <person name="Bosdet I.E."/>
            <person name="Brent M.R."/>
            <person name="Chiu R."/>
            <person name="Doering T.L."/>
            <person name="Donlin M.J."/>
            <person name="D'Souza C.A."/>
            <person name="Fox D.S."/>
            <person name="Grinberg V."/>
            <person name="Fu J."/>
            <person name="Fukushima M."/>
            <person name="Haas B.J."/>
            <person name="Huang J.C."/>
            <person name="Janbon G."/>
            <person name="Jones S.J.M."/>
            <person name="Koo H.L."/>
            <person name="Krzywinski M.I."/>
            <person name="Kwon-Chung K.J."/>
            <person name="Lengeler K.B."/>
            <person name="Maiti R."/>
            <person name="Marra M.A."/>
            <person name="Marra R.E."/>
            <person name="Mathewson C.A."/>
            <person name="Mitchell T.G."/>
            <person name="Pertea M."/>
            <person name="Riggs F.R."/>
            <person name="Salzberg S.L."/>
            <person name="Schein J.E."/>
            <person name="Shvartsbeyn A."/>
            <person name="Shin H."/>
            <person name="Shumway M."/>
            <person name="Specht C.A."/>
            <person name="Suh B.B."/>
            <person name="Tenney A."/>
            <person name="Utterback T.R."/>
            <person name="Wickes B.L."/>
            <person name="Wortman J.R."/>
            <person name="Wye N.H."/>
            <person name="Kronstad J.W."/>
            <person name="Lodge J.K."/>
            <person name="Heitman J."/>
            <person name="Davis R.W."/>
            <person name="Fraser C.M."/>
            <person name="Hyman R.W."/>
        </authorList>
    </citation>
    <scope>NUCLEOTIDE SEQUENCE [LARGE SCALE GENOMIC DNA]</scope>
    <source>
        <strain>JEC21 / ATCC MYA-565</strain>
    </source>
</reference>
<name>SEC23_CRYNJ</name>
<accession>P0CR38</accession>
<accession>Q55KV2</accession>
<accession>Q5KAM7</accession>
<sequence>MNFEDIEDKDGVRFSWNVWPSSRLEATRTVVPISALYTPLKEREDLPPVMYEPVTCKGSSCKAILNPYCQVDVRGKMWICPFCLQRNPFPPHYHQDLSPNNLPPELLPKFTTIEYTLSRPAQIPPIFLYVVDTCVDEDELKALKETLVVSLSLLPPNALVGLITYGTMAMVHELAYADCPKAYVFRGSKDYQPKQIADMLGLNPSNRPIQPVRPGQPMPAPAASKFLMPVQACEFQLTNILEQLQRDPWPVEQDKRPLRCTGVALSVAVSLLETAFPNTGARIMLFSGGPATDGPGMVVGPELREPIRSHHDIDRDSVKHFKRASKFYEALSKRASVNGHAIDIYAGCLDQVGLLEMKSLTNATNGVMTISDSFMTAIFKQSFLRTLGKDEQGYLKMGFNATYDVLTTKELKISGVIGHVISANKKSSCVGETEIGIGQTSAWKVCSLTPKSTLATYFEVVTPAGQALTPNQSGLIQFVTHYQHSSGQYRLRVTTVSRVFQEGGHPSIAASFDQEAAAVLMARIAVFKAEIDDSPDVLRWLDRMLIRLCQKFADYRKEDPTSFQLSPNFSIYPQFMFHLRRSQFLQVFNNSPDETAFYRHVLNDSDVNNSLIMIQPTLMSYGFDSEPHPVLLDSVSIRPDVILLLDTFFHILIFHGETIAQWRKANYQEQEDYANFKELLEAPIGDAQELLEDRMPIPRYVVCDQGGSQARFLLSKLNPSTTHMSGSNYGAGPAGGQAIFTDDVSLQVFMEHLKRLAVGASTS</sequence>
<proteinExistence type="inferred from homology"/>
<dbReference type="EMBL" id="AE017350">
    <property type="protein sequence ID" value="AAW45976.1"/>
    <property type="molecule type" value="Genomic_DNA"/>
</dbReference>
<dbReference type="RefSeq" id="XP_567493.1">
    <property type="nucleotide sequence ID" value="XM_567493.1"/>
</dbReference>
<dbReference type="SMR" id="P0CR38"/>
<dbReference type="FunCoup" id="P0CR38">
    <property type="interactions" value="384"/>
</dbReference>
<dbReference type="STRING" id="214684.P0CR38"/>
<dbReference type="PaxDb" id="214684-P0CR38"/>
<dbReference type="EnsemblFungi" id="AAW45976">
    <property type="protein sequence ID" value="AAW45976"/>
    <property type="gene ID" value="CNJ01150"/>
</dbReference>
<dbReference type="GeneID" id="3254041"/>
<dbReference type="KEGG" id="cne:CNJ01150"/>
<dbReference type="VEuPathDB" id="FungiDB:CNJ01150"/>
<dbReference type="eggNOG" id="KOG1986">
    <property type="taxonomic scope" value="Eukaryota"/>
</dbReference>
<dbReference type="HOGENOM" id="CLU_008658_3_0_1"/>
<dbReference type="InParanoid" id="P0CR38"/>
<dbReference type="OMA" id="FPPHYAE"/>
<dbReference type="OrthoDB" id="10256289at2759"/>
<dbReference type="Proteomes" id="UP000002149">
    <property type="component" value="Chromosome 10"/>
</dbReference>
<dbReference type="GO" id="GO:0030127">
    <property type="term" value="C:COPII vesicle coat"/>
    <property type="evidence" value="ECO:0000318"/>
    <property type="project" value="GO_Central"/>
</dbReference>
<dbReference type="GO" id="GO:0070971">
    <property type="term" value="C:endoplasmic reticulum exit site"/>
    <property type="evidence" value="ECO:0000318"/>
    <property type="project" value="GO_Central"/>
</dbReference>
<dbReference type="GO" id="GO:0005789">
    <property type="term" value="C:endoplasmic reticulum membrane"/>
    <property type="evidence" value="ECO:0007669"/>
    <property type="project" value="UniProtKB-SubCell"/>
</dbReference>
<dbReference type="GO" id="GO:0000139">
    <property type="term" value="C:Golgi membrane"/>
    <property type="evidence" value="ECO:0007669"/>
    <property type="project" value="UniProtKB-SubCell"/>
</dbReference>
<dbReference type="GO" id="GO:0005096">
    <property type="term" value="F:GTPase activator activity"/>
    <property type="evidence" value="ECO:0000318"/>
    <property type="project" value="GO_Central"/>
</dbReference>
<dbReference type="GO" id="GO:0008270">
    <property type="term" value="F:zinc ion binding"/>
    <property type="evidence" value="ECO:0007669"/>
    <property type="project" value="InterPro"/>
</dbReference>
<dbReference type="GO" id="GO:0090110">
    <property type="term" value="P:COPII-coated vesicle cargo loading"/>
    <property type="evidence" value="ECO:0000318"/>
    <property type="project" value="GO_Central"/>
</dbReference>
<dbReference type="GO" id="GO:0006886">
    <property type="term" value="P:intracellular protein transport"/>
    <property type="evidence" value="ECO:0007669"/>
    <property type="project" value="InterPro"/>
</dbReference>
<dbReference type="CDD" id="cd01478">
    <property type="entry name" value="Sec23-like"/>
    <property type="match status" value="1"/>
</dbReference>
<dbReference type="CDD" id="cd11287">
    <property type="entry name" value="Sec23_C"/>
    <property type="match status" value="1"/>
</dbReference>
<dbReference type="FunFam" id="1.20.120.730:FF:000001">
    <property type="entry name" value="Protein transport protein SEC23"/>
    <property type="match status" value="1"/>
</dbReference>
<dbReference type="FunFam" id="2.30.30.380:FF:000001">
    <property type="entry name" value="Protein transport protein SEC23"/>
    <property type="match status" value="1"/>
</dbReference>
<dbReference type="FunFam" id="3.40.20.10:FF:000006">
    <property type="entry name" value="Protein transport protein SEC23"/>
    <property type="match status" value="1"/>
</dbReference>
<dbReference type="FunFam" id="3.40.50.410:FF:000008">
    <property type="entry name" value="Protein transport protein SEC23"/>
    <property type="match status" value="1"/>
</dbReference>
<dbReference type="Gene3D" id="2.60.40.1670">
    <property type="entry name" value="beta-sandwich domain of Sec23/24"/>
    <property type="match status" value="1"/>
</dbReference>
<dbReference type="Gene3D" id="1.20.120.730">
    <property type="entry name" value="Sec23/Sec24 helical domain"/>
    <property type="match status" value="1"/>
</dbReference>
<dbReference type="Gene3D" id="3.40.20.10">
    <property type="entry name" value="Severin"/>
    <property type="match status" value="1"/>
</dbReference>
<dbReference type="Gene3D" id="3.40.50.410">
    <property type="entry name" value="von Willebrand factor, type A domain"/>
    <property type="match status" value="1"/>
</dbReference>
<dbReference type="Gene3D" id="2.30.30.380">
    <property type="entry name" value="Zn-finger domain of Sec23/24"/>
    <property type="match status" value="1"/>
</dbReference>
<dbReference type="InterPro" id="IPR029006">
    <property type="entry name" value="ADF-H/Gelsolin-like_dom_sf"/>
</dbReference>
<dbReference type="InterPro" id="IPR007123">
    <property type="entry name" value="Gelsolin-like_dom"/>
</dbReference>
<dbReference type="InterPro" id="IPR036180">
    <property type="entry name" value="Gelsolin-like_dom_sf"/>
</dbReference>
<dbReference type="InterPro" id="IPR037364">
    <property type="entry name" value="Sec23"/>
</dbReference>
<dbReference type="InterPro" id="IPR006900">
    <property type="entry name" value="Sec23/24_helical_dom"/>
</dbReference>
<dbReference type="InterPro" id="IPR036175">
    <property type="entry name" value="Sec23/24_helical_dom_sf"/>
</dbReference>
<dbReference type="InterPro" id="IPR006896">
    <property type="entry name" value="Sec23/24_trunk_dom"/>
</dbReference>
<dbReference type="InterPro" id="IPR012990">
    <property type="entry name" value="Sec23_24_beta_S"/>
</dbReference>
<dbReference type="InterPro" id="IPR037550">
    <property type="entry name" value="Sec23_C"/>
</dbReference>
<dbReference type="InterPro" id="IPR036465">
    <property type="entry name" value="vWFA_dom_sf"/>
</dbReference>
<dbReference type="InterPro" id="IPR006895">
    <property type="entry name" value="Znf_Sec23_Sec24"/>
</dbReference>
<dbReference type="InterPro" id="IPR036174">
    <property type="entry name" value="Znf_Sec23_Sec24_sf"/>
</dbReference>
<dbReference type="PANTHER" id="PTHR11141">
    <property type="entry name" value="PROTEIN TRANSPORT PROTEIN SEC23"/>
    <property type="match status" value="1"/>
</dbReference>
<dbReference type="PANTHER" id="PTHR11141:SF0">
    <property type="entry name" value="PROTEIN TRANSPORT PROTEIN SEC23"/>
    <property type="match status" value="1"/>
</dbReference>
<dbReference type="Pfam" id="PF00626">
    <property type="entry name" value="Gelsolin"/>
    <property type="match status" value="1"/>
</dbReference>
<dbReference type="Pfam" id="PF08033">
    <property type="entry name" value="Sec23_BS"/>
    <property type="match status" value="1"/>
</dbReference>
<dbReference type="Pfam" id="PF04815">
    <property type="entry name" value="Sec23_helical"/>
    <property type="match status" value="1"/>
</dbReference>
<dbReference type="Pfam" id="PF04811">
    <property type="entry name" value="Sec23_trunk"/>
    <property type="match status" value="1"/>
</dbReference>
<dbReference type="Pfam" id="PF04810">
    <property type="entry name" value="zf-Sec23_Sec24"/>
    <property type="match status" value="1"/>
</dbReference>
<dbReference type="SUPFAM" id="SSF81995">
    <property type="entry name" value="beta-sandwich domain of Sec23/24"/>
    <property type="match status" value="1"/>
</dbReference>
<dbReference type="SUPFAM" id="SSF82754">
    <property type="entry name" value="C-terminal, gelsolin-like domain of Sec23/24"/>
    <property type="match status" value="1"/>
</dbReference>
<dbReference type="SUPFAM" id="SSF81811">
    <property type="entry name" value="Helical domain of Sec23/24"/>
    <property type="match status" value="1"/>
</dbReference>
<dbReference type="SUPFAM" id="SSF53300">
    <property type="entry name" value="vWA-like"/>
    <property type="match status" value="1"/>
</dbReference>
<dbReference type="SUPFAM" id="SSF82919">
    <property type="entry name" value="Zn-finger domain of Sec23/24"/>
    <property type="match status" value="1"/>
</dbReference>
<keyword id="KW-0963">Cytoplasm</keyword>
<keyword id="KW-0968">Cytoplasmic vesicle</keyword>
<keyword id="KW-0256">Endoplasmic reticulum</keyword>
<keyword id="KW-0931">ER-Golgi transport</keyword>
<keyword id="KW-0333">Golgi apparatus</keyword>
<keyword id="KW-0472">Membrane</keyword>
<keyword id="KW-0479">Metal-binding</keyword>
<keyword id="KW-0653">Protein transport</keyword>
<keyword id="KW-1185">Reference proteome</keyword>
<keyword id="KW-0813">Transport</keyword>
<keyword id="KW-0862">Zinc</keyword>
<organism>
    <name type="scientific">Cryptococcus neoformans var. neoformans serotype D (strain JEC21 / ATCC MYA-565)</name>
    <name type="common">Filobasidiella neoformans</name>
    <dbReference type="NCBI Taxonomy" id="214684"/>
    <lineage>
        <taxon>Eukaryota</taxon>
        <taxon>Fungi</taxon>
        <taxon>Dikarya</taxon>
        <taxon>Basidiomycota</taxon>
        <taxon>Agaricomycotina</taxon>
        <taxon>Tremellomycetes</taxon>
        <taxon>Tremellales</taxon>
        <taxon>Cryptococcaceae</taxon>
        <taxon>Cryptococcus</taxon>
        <taxon>Cryptococcus neoformans species complex</taxon>
    </lineage>
</organism>
<feature type="chain" id="PRO_0000295460" description="Protein transport protein SEC23">
    <location>
        <begin position="1"/>
        <end position="763"/>
    </location>
</feature>
<feature type="binding site" evidence="1">
    <location>
        <position position="56"/>
    </location>
    <ligand>
        <name>Zn(2+)</name>
        <dbReference type="ChEBI" id="CHEBI:29105"/>
    </ligand>
</feature>
<feature type="binding site" evidence="1">
    <location>
        <position position="61"/>
    </location>
    <ligand>
        <name>Zn(2+)</name>
        <dbReference type="ChEBI" id="CHEBI:29105"/>
    </ligand>
</feature>
<feature type="binding site" evidence="1">
    <location>
        <position position="80"/>
    </location>
    <ligand>
        <name>Zn(2+)</name>
        <dbReference type="ChEBI" id="CHEBI:29105"/>
    </ligand>
</feature>
<feature type="binding site" evidence="1">
    <location>
        <position position="83"/>
    </location>
    <ligand>
        <name>Zn(2+)</name>
        <dbReference type="ChEBI" id="CHEBI:29105"/>
    </ligand>
</feature>
<evidence type="ECO:0000250" key="1"/>
<evidence type="ECO:0000305" key="2"/>
<gene>
    <name type="primary">SEC23</name>
    <name type="ordered locus">CNJ01150</name>
</gene>
<comment type="function">
    <text evidence="1">Component of the coat protein complex II (COPII) which promotes the formation of transport vesicles from the endoplasmic reticulum (ER). The coat has two main functions, the physical deformation of the endoplasmic reticulum membrane into vesicles and the selection of cargo molecules (By similarity).</text>
</comment>
<comment type="subunit">
    <text evidence="1">The COPII coat is composed of at least 5 proteins: the SEC23/24 complex, the SEC13/31 complex, and the protein SAR1.</text>
</comment>
<comment type="subcellular location">
    <subcellularLocation>
        <location evidence="1">Cytoplasm</location>
    </subcellularLocation>
    <subcellularLocation>
        <location evidence="1">Cytoplasmic vesicle</location>
        <location evidence="1">COPII-coated vesicle membrane</location>
        <topology evidence="1">Peripheral membrane protein</topology>
        <orientation evidence="1">Cytoplasmic side</orientation>
    </subcellularLocation>
    <subcellularLocation>
        <location evidence="1">Endoplasmic reticulum membrane</location>
        <topology evidence="1">Peripheral membrane protein</topology>
        <orientation evidence="1">Cytoplasmic side</orientation>
    </subcellularLocation>
    <subcellularLocation>
        <location evidence="1">Golgi apparatus membrane</location>
        <topology evidence="1">Peripheral membrane protein</topology>
        <orientation evidence="1">Cytoplasmic side</orientation>
    </subcellularLocation>
</comment>
<comment type="similarity">
    <text evidence="2">Belongs to the SEC23/SEC24 family. SEC23 subfamily.</text>
</comment>